<proteinExistence type="predicted"/>
<comment type="subcellular location">
    <subcellularLocation>
        <location evidence="2">Cell membrane</location>
        <topology evidence="2">Single-pass membrane protein</topology>
    </subcellularLocation>
</comment>
<comment type="sequence caution" evidence="2">
    <conflict type="erroneous initiation">
        <sequence resource="EMBL-CDS" id="AAN79592"/>
    </conflict>
    <text>Extended N-terminus.</text>
</comment>
<keyword id="KW-1003">Cell membrane</keyword>
<keyword id="KW-0472">Membrane</keyword>
<keyword id="KW-1185">Reference proteome</keyword>
<keyword id="KW-0812">Transmembrane</keyword>
<keyword id="KW-1133">Transmembrane helix</keyword>
<protein>
    <recommendedName>
        <fullName>Uncharacterized protein YmcE</fullName>
    </recommendedName>
</protein>
<organism>
    <name type="scientific">Escherichia coli O6:H1 (strain CFT073 / ATCC 700928 / UPEC)</name>
    <dbReference type="NCBI Taxonomy" id="199310"/>
    <lineage>
        <taxon>Bacteria</taxon>
        <taxon>Pseudomonadati</taxon>
        <taxon>Pseudomonadota</taxon>
        <taxon>Gammaproteobacteria</taxon>
        <taxon>Enterobacterales</taxon>
        <taxon>Enterobacteriaceae</taxon>
        <taxon>Escherichia</taxon>
    </lineage>
</organism>
<feature type="chain" id="PRO_0000097706" description="Uncharacterized protein YmcE">
    <location>
        <begin position="1"/>
        <end position="76"/>
    </location>
</feature>
<feature type="transmembrane region" description="Helical" evidence="1">
    <location>
        <begin position="18"/>
        <end position="38"/>
    </location>
</feature>
<sequence length="76" mass="8727">MRRWISQNNIRLPRGAFFISALFFFNAVCIVSDNLLIIESFGEMAYNISYLTRVPGTNTLLACCCLLRPEEVNSEY</sequence>
<dbReference type="EMBL" id="AE014075">
    <property type="protein sequence ID" value="AAN79592.1"/>
    <property type="status" value="ALT_INIT"/>
    <property type="molecule type" value="Genomic_DNA"/>
</dbReference>
<dbReference type="RefSeq" id="WP_001309400.1">
    <property type="nucleotide sequence ID" value="NZ_CP051263.1"/>
</dbReference>
<dbReference type="STRING" id="199310.c1124"/>
<dbReference type="GeneID" id="93776420"/>
<dbReference type="KEGG" id="ecc:c1124"/>
<dbReference type="eggNOG" id="ENOG5033ZMW">
    <property type="taxonomic scope" value="Bacteria"/>
</dbReference>
<dbReference type="HOGENOM" id="CLU_2478691_0_0_6"/>
<dbReference type="Proteomes" id="UP000001410">
    <property type="component" value="Chromosome"/>
</dbReference>
<dbReference type="GO" id="GO:0005886">
    <property type="term" value="C:plasma membrane"/>
    <property type="evidence" value="ECO:0007669"/>
    <property type="project" value="UniProtKB-SubCell"/>
</dbReference>
<dbReference type="InterPro" id="IPR031853">
    <property type="entry name" value="YmcE_antitoxin"/>
</dbReference>
<dbReference type="NCBIfam" id="NF007379">
    <property type="entry name" value="PRK09891.1"/>
    <property type="match status" value="1"/>
</dbReference>
<dbReference type="Pfam" id="PF15939">
    <property type="entry name" value="YmcE_antitoxin"/>
    <property type="match status" value="1"/>
</dbReference>
<gene>
    <name type="primary">ymcE</name>
    <name type="ordered locus">c1124</name>
</gene>
<name>YMCE_ECOL6</name>
<evidence type="ECO:0000255" key="1"/>
<evidence type="ECO:0000305" key="2"/>
<reference key="1">
    <citation type="journal article" date="2002" name="Proc. Natl. Acad. Sci. U.S.A.">
        <title>Extensive mosaic structure revealed by the complete genome sequence of uropathogenic Escherichia coli.</title>
        <authorList>
            <person name="Welch R.A."/>
            <person name="Burland V."/>
            <person name="Plunkett G. III"/>
            <person name="Redford P."/>
            <person name="Roesch P."/>
            <person name="Rasko D."/>
            <person name="Buckles E.L."/>
            <person name="Liou S.-R."/>
            <person name="Boutin A."/>
            <person name="Hackett J."/>
            <person name="Stroud D."/>
            <person name="Mayhew G.F."/>
            <person name="Rose D.J."/>
            <person name="Zhou S."/>
            <person name="Schwartz D.C."/>
            <person name="Perna N.T."/>
            <person name="Mobley H.L.T."/>
            <person name="Donnenberg M.S."/>
            <person name="Blattner F.R."/>
        </authorList>
    </citation>
    <scope>NUCLEOTIDE SEQUENCE [LARGE SCALE GENOMIC DNA]</scope>
    <source>
        <strain>CFT073 / ATCC 700928 / UPEC</strain>
    </source>
</reference>
<accession>P0AAA6</accession>
<accession>P52634</accession>